<protein>
    <recommendedName>
        <fullName>Putative receptor-like protein kinase At5g39000</fullName>
        <ecNumber>2.7.11.-</ecNumber>
    </recommendedName>
</protein>
<gene>
    <name type="ordered locus">At5g39000</name>
    <name type="ORF">MXF12.2</name>
</gene>
<keyword id="KW-0067">ATP-binding</keyword>
<keyword id="KW-0325">Glycoprotein</keyword>
<keyword id="KW-0418">Kinase</keyword>
<keyword id="KW-0472">Membrane</keyword>
<keyword id="KW-0547">Nucleotide-binding</keyword>
<keyword id="KW-1185">Reference proteome</keyword>
<keyword id="KW-0723">Serine/threonine-protein kinase</keyword>
<keyword id="KW-0732">Signal</keyword>
<keyword id="KW-0808">Transferase</keyword>
<keyword id="KW-0812">Transmembrane</keyword>
<keyword id="KW-1133">Transmembrane helix</keyword>
<comment type="subcellular location">
    <subcellularLocation>
        <location evidence="5">Membrane</location>
        <topology evidence="5">Single-pass type I membrane protein</topology>
    </subcellularLocation>
</comment>
<comment type="similarity">
    <text evidence="2">Belongs to the protein kinase superfamily. Ser/Thr protein kinase family.</text>
</comment>
<accession>Q9FID8</accession>
<evidence type="ECO:0000255" key="1"/>
<evidence type="ECO:0000255" key="2">
    <source>
        <dbReference type="PROSITE-ProRule" id="PRU00159"/>
    </source>
</evidence>
<evidence type="ECO:0000255" key="3">
    <source>
        <dbReference type="PROSITE-ProRule" id="PRU10027"/>
    </source>
</evidence>
<evidence type="ECO:0000256" key="4">
    <source>
        <dbReference type="SAM" id="MobiDB-lite"/>
    </source>
</evidence>
<evidence type="ECO:0000305" key="5"/>
<proteinExistence type="inferred from homology"/>
<sequence>MIRHALLIFSILVSTPIVGEGATSTYEPTDVFLFNCGDTSNNVDVSGRNWTAENQKILSSNLVNASFTAQASYQESGVSQIPYMTARIFRSEFTYSFPVTPGSNFLRLYFYPTRYGSQFNAVKSFFSVKVNGFTLLNNFSADLTVKASKPQTEFIIKEFIIPVYQTLNLTFTPSLDSLAFVNGIEIVSIPNRFYSKGGFDDVITNVGSSVDFHIENSTAFETVYRLNVGGKTVGDSGMFRRWVSDDEIILSESSGISPIVPDIKINYTEKTPSYVAPDDVYATSRSMGNADHPEQNLNFNLTWLFTVDAGFSYLVRLHFCETLSEVNKEGQRVFSIFIENQTATLEMDVFRMSGGSWIPMYLDYTVIAGSGSGRRHDLRLDLHPLVSINPKYYDAILNGVEILKMNDPDGNLAGPNPDPLVSPDLIPNRATPRIRKNKSHILPITLAVVGSLVVLAMFVVGVLVIMKKKKKSKPSTNSSWCPLPHGTDSTNTKPAKSLPADLCRRFSIFEIKSATNDFEDKLIIGVGGFGSVYKGQIDGGATLVAVKRLEITSNQGAKEFETELEMLSKLRHVHLVSLIGYCDEDNEMVLVYEYMPHGTLKDHLFRRDKTSDPPLSWKRRLEICIGAARGLQYLHTGAKYTIIHRDIKTTNILLDENFVTKVSDFGLSRVGPTSASQTHVSTVVKGTFGYLDPEYYRRQVLTEKSDVYSFGVVLLEVLCCRPIRMQSVPPEQADLIRWVKSNYRRGTVDQIIDSDLSADITSTSLEKFCEIAVRCVQDRGMERPPMNDVVWALEFALQLHETAKKKNDNVESLDLMPSGEVGTTTDGEDDLFSRTTGHVGKSTTTDDSVLVVGDERSGSSWGVFSEINEPKAR</sequence>
<name>Y5900_ARATH</name>
<feature type="signal peptide" evidence="1">
    <location>
        <begin position="1"/>
        <end position="21"/>
    </location>
</feature>
<feature type="chain" id="PRO_0000388798" description="Putative receptor-like protein kinase At5g39000">
    <location>
        <begin position="22"/>
        <end position="873"/>
    </location>
</feature>
<feature type="topological domain" description="Extracellular" evidence="1">
    <location>
        <begin position="22"/>
        <end position="445"/>
    </location>
</feature>
<feature type="transmembrane region" description="Helical" evidence="1">
    <location>
        <begin position="446"/>
        <end position="466"/>
    </location>
</feature>
<feature type="topological domain" description="Cytoplasmic" evidence="1">
    <location>
        <begin position="467"/>
        <end position="873"/>
    </location>
</feature>
<feature type="domain" description="Protein kinase" evidence="2">
    <location>
        <begin position="518"/>
        <end position="803"/>
    </location>
</feature>
<feature type="region of interest" description="Disordered" evidence="4">
    <location>
        <begin position="472"/>
        <end position="494"/>
    </location>
</feature>
<feature type="region of interest" description="Disordered" evidence="4">
    <location>
        <begin position="813"/>
        <end position="843"/>
    </location>
</feature>
<feature type="compositionally biased region" description="Polar residues" evidence="4">
    <location>
        <begin position="833"/>
        <end position="843"/>
    </location>
</feature>
<feature type="active site" description="Proton acceptor" evidence="2 3">
    <location>
        <position position="646"/>
    </location>
</feature>
<feature type="binding site" evidence="2">
    <location>
        <begin position="524"/>
        <end position="532"/>
    </location>
    <ligand>
        <name>ATP</name>
        <dbReference type="ChEBI" id="CHEBI:30616"/>
    </ligand>
</feature>
<feature type="binding site" evidence="2">
    <location>
        <position position="547"/>
    </location>
    <ligand>
        <name>ATP</name>
        <dbReference type="ChEBI" id="CHEBI:30616"/>
    </ligand>
</feature>
<feature type="glycosylation site" description="N-linked (GlcNAc...) asparagine" evidence="1">
    <location>
        <position position="49"/>
    </location>
</feature>
<feature type="glycosylation site" description="N-linked (GlcNAc...) asparagine" evidence="1">
    <location>
        <position position="64"/>
    </location>
</feature>
<feature type="glycosylation site" description="N-linked (GlcNAc...) asparagine" evidence="1">
    <location>
        <position position="138"/>
    </location>
</feature>
<feature type="glycosylation site" description="N-linked (GlcNAc...) asparagine" evidence="1">
    <location>
        <position position="168"/>
    </location>
</feature>
<feature type="glycosylation site" description="N-linked (GlcNAc...) asparagine" evidence="1">
    <location>
        <position position="216"/>
    </location>
</feature>
<feature type="glycosylation site" description="N-linked (GlcNAc...) asparagine" evidence="1">
    <location>
        <position position="266"/>
    </location>
</feature>
<feature type="glycosylation site" description="N-linked (GlcNAc...) asparagine" evidence="1">
    <location>
        <position position="300"/>
    </location>
</feature>
<feature type="glycosylation site" description="N-linked (GlcNAc...) asparagine" evidence="1">
    <location>
        <position position="340"/>
    </location>
</feature>
<feature type="glycosylation site" description="N-linked (GlcNAc...) asparagine" evidence="1">
    <location>
        <position position="437"/>
    </location>
</feature>
<reference key="1">
    <citation type="journal article" date="1998" name="DNA Res.">
        <title>Structural analysis of Arabidopsis thaliana chromosome 5. VIII. Sequence features of the regions of 1,081,958 bp covered by seventeen physically assigned P1 and TAC clones.</title>
        <authorList>
            <person name="Asamizu E."/>
            <person name="Sato S."/>
            <person name="Kaneko T."/>
            <person name="Nakamura Y."/>
            <person name="Kotani H."/>
            <person name="Miyajima N."/>
            <person name="Tabata S."/>
        </authorList>
    </citation>
    <scope>NUCLEOTIDE SEQUENCE [LARGE SCALE GENOMIC DNA]</scope>
    <source>
        <strain>cv. Columbia</strain>
    </source>
</reference>
<reference key="2">
    <citation type="journal article" date="2017" name="Plant J.">
        <title>Araport11: a complete reannotation of the Arabidopsis thaliana reference genome.</title>
        <authorList>
            <person name="Cheng C.Y."/>
            <person name="Krishnakumar V."/>
            <person name="Chan A.P."/>
            <person name="Thibaud-Nissen F."/>
            <person name="Schobel S."/>
            <person name="Town C.D."/>
        </authorList>
    </citation>
    <scope>GENOME REANNOTATION</scope>
    <source>
        <strain>cv. Columbia</strain>
    </source>
</reference>
<dbReference type="EC" id="2.7.11.-"/>
<dbReference type="EMBL" id="AB016892">
    <property type="protein sequence ID" value="BAB10824.1"/>
    <property type="molecule type" value="Genomic_DNA"/>
</dbReference>
<dbReference type="EMBL" id="CP002688">
    <property type="protein sequence ID" value="AED94385.1"/>
    <property type="molecule type" value="Genomic_DNA"/>
</dbReference>
<dbReference type="RefSeq" id="NP_198716.1">
    <property type="nucleotide sequence ID" value="NM_123262.2"/>
</dbReference>
<dbReference type="SMR" id="Q9FID8"/>
<dbReference type="STRING" id="3702.Q9FID8"/>
<dbReference type="GlyGen" id="Q9FID8">
    <property type="glycosylation" value="11 sites"/>
</dbReference>
<dbReference type="iPTMnet" id="Q9FID8"/>
<dbReference type="PaxDb" id="3702-AT5G39000.1"/>
<dbReference type="ProteomicsDB" id="242857"/>
<dbReference type="EnsemblPlants" id="AT5G39000.1">
    <property type="protein sequence ID" value="AT5G39000.1"/>
    <property type="gene ID" value="AT5G39000"/>
</dbReference>
<dbReference type="GeneID" id="833892"/>
<dbReference type="Gramene" id="AT5G39000.1">
    <property type="protein sequence ID" value="AT5G39000.1"/>
    <property type="gene ID" value="AT5G39000"/>
</dbReference>
<dbReference type="KEGG" id="ath:AT5G39000"/>
<dbReference type="Araport" id="AT5G39000"/>
<dbReference type="TAIR" id="AT5G39000">
    <property type="gene designation" value="MDS2"/>
</dbReference>
<dbReference type="eggNOG" id="KOG1187">
    <property type="taxonomic scope" value="Eukaryota"/>
</dbReference>
<dbReference type="HOGENOM" id="CLU_000288_42_5_1"/>
<dbReference type="InParanoid" id="Q9FID8"/>
<dbReference type="OMA" id="INYMENT"/>
<dbReference type="PhylomeDB" id="Q9FID8"/>
<dbReference type="PRO" id="PR:Q9FID8"/>
<dbReference type="Proteomes" id="UP000006548">
    <property type="component" value="Chromosome 5"/>
</dbReference>
<dbReference type="ExpressionAtlas" id="Q9FID8">
    <property type="expression patterns" value="baseline and differential"/>
</dbReference>
<dbReference type="GO" id="GO:0016020">
    <property type="term" value="C:membrane"/>
    <property type="evidence" value="ECO:0007669"/>
    <property type="project" value="UniProtKB-SubCell"/>
</dbReference>
<dbReference type="GO" id="GO:0009536">
    <property type="term" value="C:plastid"/>
    <property type="evidence" value="ECO:0007005"/>
    <property type="project" value="TAIR"/>
</dbReference>
<dbReference type="GO" id="GO:0005524">
    <property type="term" value="F:ATP binding"/>
    <property type="evidence" value="ECO:0007669"/>
    <property type="project" value="UniProtKB-KW"/>
</dbReference>
<dbReference type="GO" id="GO:0004674">
    <property type="term" value="F:protein serine/threonine kinase activity"/>
    <property type="evidence" value="ECO:0007669"/>
    <property type="project" value="UniProtKB-KW"/>
</dbReference>
<dbReference type="GO" id="GO:0004714">
    <property type="term" value="F:transmembrane receptor protein tyrosine kinase activity"/>
    <property type="evidence" value="ECO:0007669"/>
    <property type="project" value="InterPro"/>
</dbReference>
<dbReference type="GO" id="GO:0010038">
    <property type="term" value="P:response to metal ion"/>
    <property type="evidence" value="ECO:0000316"/>
    <property type="project" value="TAIR"/>
</dbReference>
<dbReference type="CDD" id="cd14066">
    <property type="entry name" value="STKc_IRAK"/>
    <property type="match status" value="1"/>
</dbReference>
<dbReference type="FunFam" id="2.60.120.430:FF:000003">
    <property type="entry name" value="FERONIA receptor-like kinase"/>
    <property type="match status" value="1"/>
</dbReference>
<dbReference type="FunFam" id="2.60.120.430:FF:000007">
    <property type="entry name" value="FERONIA receptor-like kinase"/>
    <property type="match status" value="1"/>
</dbReference>
<dbReference type="FunFam" id="1.10.510.10:FF:000252">
    <property type="entry name" value="Receptor-like protein kinase FERONIA"/>
    <property type="match status" value="1"/>
</dbReference>
<dbReference type="FunFam" id="3.30.200.20:FF:000645">
    <property type="entry name" value="Receptor-like protein kinase FERONIA"/>
    <property type="match status" value="1"/>
</dbReference>
<dbReference type="Gene3D" id="2.60.120.430">
    <property type="entry name" value="Galactose-binding lectin"/>
    <property type="match status" value="2"/>
</dbReference>
<dbReference type="Gene3D" id="3.30.200.20">
    <property type="entry name" value="Phosphorylase Kinase, domain 1"/>
    <property type="match status" value="1"/>
</dbReference>
<dbReference type="Gene3D" id="1.10.510.10">
    <property type="entry name" value="Transferase(Phosphotransferase) domain 1"/>
    <property type="match status" value="1"/>
</dbReference>
<dbReference type="InterPro" id="IPR045272">
    <property type="entry name" value="ANXUR1/2-like"/>
</dbReference>
<dbReference type="InterPro" id="IPR011009">
    <property type="entry name" value="Kinase-like_dom_sf"/>
</dbReference>
<dbReference type="InterPro" id="IPR024788">
    <property type="entry name" value="Malectin-like_Carb-bd_dom"/>
</dbReference>
<dbReference type="InterPro" id="IPR000719">
    <property type="entry name" value="Prot_kinase_dom"/>
</dbReference>
<dbReference type="InterPro" id="IPR017441">
    <property type="entry name" value="Protein_kinase_ATP_BS"/>
</dbReference>
<dbReference type="InterPro" id="IPR001245">
    <property type="entry name" value="Ser-Thr/Tyr_kinase_cat_dom"/>
</dbReference>
<dbReference type="InterPro" id="IPR008271">
    <property type="entry name" value="Ser/Thr_kinase_AS"/>
</dbReference>
<dbReference type="PANTHER" id="PTHR34590">
    <property type="entry name" value="OS03G0124300 PROTEIN-RELATED"/>
    <property type="match status" value="1"/>
</dbReference>
<dbReference type="PANTHER" id="PTHR34590:SF5">
    <property type="entry name" value="OS04G0586500 PROTEIN"/>
    <property type="match status" value="1"/>
</dbReference>
<dbReference type="Pfam" id="PF12819">
    <property type="entry name" value="Malectin_like"/>
    <property type="match status" value="1"/>
</dbReference>
<dbReference type="Pfam" id="PF07714">
    <property type="entry name" value="PK_Tyr_Ser-Thr"/>
    <property type="match status" value="1"/>
</dbReference>
<dbReference type="SMART" id="SM00220">
    <property type="entry name" value="S_TKc"/>
    <property type="match status" value="1"/>
</dbReference>
<dbReference type="SUPFAM" id="SSF56112">
    <property type="entry name" value="Protein kinase-like (PK-like)"/>
    <property type="match status" value="1"/>
</dbReference>
<dbReference type="PROSITE" id="PS00107">
    <property type="entry name" value="PROTEIN_KINASE_ATP"/>
    <property type="match status" value="1"/>
</dbReference>
<dbReference type="PROSITE" id="PS50011">
    <property type="entry name" value="PROTEIN_KINASE_DOM"/>
    <property type="match status" value="1"/>
</dbReference>
<dbReference type="PROSITE" id="PS00108">
    <property type="entry name" value="PROTEIN_KINASE_ST"/>
    <property type="match status" value="1"/>
</dbReference>
<organism>
    <name type="scientific">Arabidopsis thaliana</name>
    <name type="common">Mouse-ear cress</name>
    <dbReference type="NCBI Taxonomy" id="3702"/>
    <lineage>
        <taxon>Eukaryota</taxon>
        <taxon>Viridiplantae</taxon>
        <taxon>Streptophyta</taxon>
        <taxon>Embryophyta</taxon>
        <taxon>Tracheophyta</taxon>
        <taxon>Spermatophyta</taxon>
        <taxon>Magnoliopsida</taxon>
        <taxon>eudicotyledons</taxon>
        <taxon>Gunneridae</taxon>
        <taxon>Pentapetalae</taxon>
        <taxon>rosids</taxon>
        <taxon>malvids</taxon>
        <taxon>Brassicales</taxon>
        <taxon>Brassicaceae</taxon>
        <taxon>Camelineae</taxon>
        <taxon>Arabidopsis</taxon>
    </lineage>
</organism>